<keyword id="KW-0963">Cytoplasm</keyword>
<keyword id="KW-0342">GTP-binding</keyword>
<keyword id="KW-0378">Hydrolase</keyword>
<keyword id="KW-0460">Magnesium</keyword>
<keyword id="KW-0479">Metal-binding</keyword>
<keyword id="KW-0547">Nucleotide-binding</keyword>
<accession>A6QB70</accession>
<name>OBG_SULNB</name>
<feature type="chain" id="PRO_0000386329" description="GTPase Obg">
    <location>
        <begin position="1"/>
        <end position="373"/>
    </location>
</feature>
<feature type="domain" description="Obg" evidence="2">
    <location>
        <begin position="1"/>
        <end position="158"/>
    </location>
</feature>
<feature type="domain" description="OBG-type G" evidence="1">
    <location>
        <begin position="159"/>
        <end position="362"/>
    </location>
</feature>
<feature type="region of interest" description="Disordered" evidence="3">
    <location>
        <begin position="62"/>
        <end position="83"/>
    </location>
</feature>
<feature type="compositionally biased region" description="Basic and acidic residues" evidence="3">
    <location>
        <begin position="64"/>
        <end position="76"/>
    </location>
</feature>
<feature type="binding site" evidence="1">
    <location>
        <begin position="165"/>
        <end position="172"/>
    </location>
    <ligand>
        <name>GTP</name>
        <dbReference type="ChEBI" id="CHEBI:37565"/>
    </ligand>
</feature>
<feature type="binding site" evidence="1">
    <location>
        <position position="172"/>
    </location>
    <ligand>
        <name>Mg(2+)</name>
        <dbReference type="ChEBI" id="CHEBI:18420"/>
    </ligand>
</feature>
<feature type="binding site" evidence="1">
    <location>
        <begin position="190"/>
        <end position="194"/>
    </location>
    <ligand>
        <name>GTP</name>
        <dbReference type="ChEBI" id="CHEBI:37565"/>
    </ligand>
</feature>
<feature type="binding site" evidence="1">
    <location>
        <position position="192"/>
    </location>
    <ligand>
        <name>Mg(2+)</name>
        <dbReference type="ChEBI" id="CHEBI:18420"/>
    </ligand>
</feature>
<feature type="binding site" evidence="1">
    <location>
        <begin position="212"/>
        <end position="215"/>
    </location>
    <ligand>
        <name>GTP</name>
        <dbReference type="ChEBI" id="CHEBI:37565"/>
    </ligand>
</feature>
<feature type="binding site" evidence="1">
    <location>
        <begin position="280"/>
        <end position="283"/>
    </location>
    <ligand>
        <name>GTP</name>
        <dbReference type="ChEBI" id="CHEBI:37565"/>
    </ligand>
</feature>
<feature type="binding site" evidence="1">
    <location>
        <begin position="343"/>
        <end position="345"/>
    </location>
    <ligand>
        <name>GTP</name>
        <dbReference type="ChEBI" id="CHEBI:37565"/>
    </ligand>
</feature>
<comment type="function">
    <text evidence="1">An essential GTPase which binds GTP, GDP and possibly (p)ppGpp with moderate affinity, with high nucleotide exchange rates and a fairly low GTP hydrolysis rate. Plays a role in control of the cell cycle, stress response, ribosome biogenesis and in those bacteria that undergo differentiation, in morphogenesis control.</text>
</comment>
<comment type="cofactor">
    <cofactor evidence="1">
        <name>Mg(2+)</name>
        <dbReference type="ChEBI" id="CHEBI:18420"/>
    </cofactor>
</comment>
<comment type="subunit">
    <text evidence="1">Monomer.</text>
</comment>
<comment type="subcellular location">
    <subcellularLocation>
        <location evidence="1">Cytoplasm</location>
    </subcellularLocation>
</comment>
<comment type="similarity">
    <text evidence="1">Belongs to the TRAFAC class OBG-HflX-like GTPase superfamily. OBG GTPase family.</text>
</comment>
<proteinExistence type="inferred from homology"/>
<organism>
    <name type="scientific">Sulfurovum sp. (strain NBC37-1)</name>
    <dbReference type="NCBI Taxonomy" id="387093"/>
    <lineage>
        <taxon>Bacteria</taxon>
        <taxon>Pseudomonadati</taxon>
        <taxon>Campylobacterota</taxon>
        <taxon>Epsilonproteobacteria</taxon>
        <taxon>Campylobacterales</taxon>
        <taxon>Sulfurovaceae</taxon>
        <taxon>Sulfurovum</taxon>
    </lineage>
</organism>
<reference key="1">
    <citation type="journal article" date="2007" name="Proc. Natl. Acad. Sci. U.S.A.">
        <title>Deep-sea vent epsilon-proteobacterial genomes provide insights into emergence of pathogens.</title>
        <authorList>
            <person name="Nakagawa S."/>
            <person name="Takaki Y."/>
            <person name="Shimamura S."/>
            <person name="Reysenbach A.-L."/>
            <person name="Takai K."/>
            <person name="Horikoshi K."/>
        </authorList>
    </citation>
    <scope>NUCLEOTIDE SEQUENCE [LARGE SCALE GENOMIC DNA]</scope>
    <source>
        <strain>NBC37-1</strain>
    </source>
</reference>
<dbReference type="EC" id="3.6.5.-" evidence="1"/>
<dbReference type="EMBL" id="AP009179">
    <property type="protein sequence ID" value="BAF72729.1"/>
    <property type="molecule type" value="Genomic_DNA"/>
</dbReference>
<dbReference type="RefSeq" id="WP_012083539.1">
    <property type="nucleotide sequence ID" value="NC_009663.1"/>
</dbReference>
<dbReference type="SMR" id="A6QB70"/>
<dbReference type="STRING" id="387093.SUN_1782"/>
<dbReference type="KEGG" id="sun:SUN_1782"/>
<dbReference type="eggNOG" id="COG0536">
    <property type="taxonomic scope" value="Bacteria"/>
</dbReference>
<dbReference type="HOGENOM" id="CLU_011747_2_0_7"/>
<dbReference type="OrthoDB" id="9807318at2"/>
<dbReference type="Proteomes" id="UP000006378">
    <property type="component" value="Chromosome"/>
</dbReference>
<dbReference type="GO" id="GO:0005737">
    <property type="term" value="C:cytoplasm"/>
    <property type="evidence" value="ECO:0007669"/>
    <property type="project" value="UniProtKB-SubCell"/>
</dbReference>
<dbReference type="GO" id="GO:0005525">
    <property type="term" value="F:GTP binding"/>
    <property type="evidence" value="ECO:0007669"/>
    <property type="project" value="UniProtKB-UniRule"/>
</dbReference>
<dbReference type="GO" id="GO:0003924">
    <property type="term" value="F:GTPase activity"/>
    <property type="evidence" value="ECO:0007669"/>
    <property type="project" value="UniProtKB-UniRule"/>
</dbReference>
<dbReference type="GO" id="GO:0000287">
    <property type="term" value="F:magnesium ion binding"/>
    <property type="evidence" value="ECO:0007669"/>
    <property type="project" value="InterPro"/>
</dbReference>
<dbReference type="GO" id="GO:0042254">
    <property type="term" value="P:ribosome biogenesis"/>
    <property type="evidence" value="ECO:0007669"/>
    <property type="project" value="UniProtKB-UniRule"/>
</dbReference>
<dbReference type="CDD" id="cd01898">
    <property type="entry name" value="Obg"/>
    <property type="match status" value="1"/>
</dbReference>
<dbReference type="FunFam" id="2.70.210.12:FF:000001">
    <property type="entry name" value="GTPase Obg"/>
    <property type="match status" value="1"/>
</dbReference>
<dbReference type="Gene3D" id="2.70.210.12">
    <property type="entry name" value="GTP1/OBG domain"/>
    <property type="match status" value="1"/>
</dbReference>
<dbReference type="Gene3D" id="3.40.50.300">
    <property type="entry name" value="P-loop containing nucleotide triphosphate hydrolases"/>
    <property type="match status" value="1"/>
</dbReference>
<dbReference type="HAMAP" id="MF_01454">
    <property type="entry name" value="GTPase_Obg"/>
    <property type="match status" value="1"/>
</dbReference>
<dbReference type="InterPro" id="IPR031167">
    <property type="entry name" value="G_OBG"/>
</dbReference>
<dbReference type="InterPro" id="IPR006073">
    <property type="entry name" value="GTP-bd"/>
</dbReference>
<dbReference type="InterPro" id="IPR014100">
    <property type="entry name" value="GTP-bd_Obg/CgtA"/>
</dbReference>
<dbReference type="InterPro" id="IPR006074">
    <property type="entry name" value="GTP1-OBG_CS"/>
</dbReference>
<dbReference type="InterPro" id="IPR006169">
    <property type="entry name" value="GTP1_OBG_dom"/>
</dbReference>
<dbReference type="InterPro" id="IPR036726">
    <property type="entry name" value="GTP1_OBG_dom_sf"/>
</dbReference>
<dbReference type="InterPro" id="IPR045086">
    <property type="entry name" value="OBG_GTPase"/>
</dbReference>
<dbReference type="InterPro" id="IPR027417">
    <property type="entry name" value="P-loop_NTPase"/>
</dbReference>
<dbReference type="NCBIfam" id="TIGR02729">
    <property type="entry name" value="Obg_CgtA"/>
    <property type="match status" value="1"/>
</dbReference>
<dbReference type="NCBIfam" id="NF008956">
    <property type="entry name" value="PRK12299.1"/>
    <property type="match status" value="1"/>
</dbReference>
<dbReference type="PANTHER" id="PTHR11702">
    <property type="entry name" value="DEVELOPMENTALLY REGULATED GTP-BINDING PROTEIN-RELATED"/>
    <property type="match status" value="1"/>
</dbReference>
<dbReference type="PANTHER" id="PTHR11702:SF31">
    <property type="entry name" value="MITOCHONDRIAL RIBOSOME-ASSOCIATED GTPASE 2"/>
    <property type="match status" value="1"/>
</dbReference>
<dbReference type="Pfam" id="PF01018">
    <property type="entry name" value="GTP1_OBG"/>
    <property type="match status" value="1"/>
</dbReference>
<dbReference type="Pfam" id="PF01926">
    <property type="entry name" value="MMR_HSR1"/>
    <property type="match status" value="1"/>
</dbReference>
<dbReference type="PRINTS" id="PR00326">
    <property type="entry name" value="GTP1OBG"/>
</dbReference>
<dbReference type="SUPFAM" id="SSF82051">
    <property type="entry name" value="Obg GTP-binding protein N-terminal domain"/>
    <property type="match status" value="1"/>
</dbReference>
<dbReference type="SUPFAM" id="SSF52540">
    <property type="entry name" value="P-loop containing nucleoside triphosphate hydrolases"/>
    <property type="match status" value="1"/>
</dbReference>
<dbReference type="PROSITE" id="PS51710">
    <property type="entry name" value="G_OBG"/>
    <property type="match status" value="1"/>
</dbReference>
<dbReference type="PROSITE" id="PS00905">
    <property type="entry name" value="GTP1_OBG"/>
    <property type="match status" value="1"/>
</dbReference>
<dbReference type="PROSITE" id="PS51883">
    <property type="entry name" value="OBG"/>
    <property type="match status" value="1"/>
</dbReference>
<evidence type="ECO:0000255" key="1">
    <source>
        <dbReference type="HAMAP-Rule" id="MF_01454"/>
    </source>
</evidence>
<evidence type="ECO:0000255" key="2">
    <source>
        <dbReference type="PROSITE-ProRule" id="PRU01231"/>
    </source>
</evidence>
<evidence type="ECO:0000256" key="3">
    <source>
        <dbReference type="SAM" id="MobiDB-lite"/>
    </source>
</evidence>
<gene>
    <name evidence="1" type="primary">obg</name>
    <name type="ordered locus">SUN_1782</name>
</gene>
<protein>
    <recommendedName>
        <fullName evidence="1">GTPase Obg</fullName>
        <ecNumber evidence="1">3.6.5.-</ecNumber>
    </recommendedName>
    <alternativeName>
        <fullName evidence="1">GTP-binding protein Obg</fullName>
    </alternativeName>
</protein>
<sequence length="373" mass="40750">MFVDSVELLISSGKGGAGAISFWTEKFVIKGGPDGGDGGRGGSVFFKVDNNTDTLSGLRGRNHIKAENGRPGEGRKKYGRKGQDTTIIVPPGTTVVDMETGEELLDLVEEGQVVKFLEGGKGGLGNMHFKSSTNQRPTYAQPGLPGITKQVRLEMKLIADVGLVGYPNVGKSTLIATLSNARPQVANYEFTTLTPKLGVVHISDYDSFMMADIPGIIEGASDGRGLGLEFLKHIERTKTLLLMIDAANYREMKYQYETLLVELDRYSETLAGRKHAIAITKIDSLSQDEVNTLTQTFLDDIGLKANDTLKKYKADMNYLSYGFKTDFGVPLPIKEPLFVLPISSVAHLNTEALRYALGDFVKNVKEETEAEEK</sequence>